<protein>
    <recommendedName>
        <fullName>Scolopendra 5887.74 Da toxin</fullName>
    </recommendedName>
</protein>
<reference key="1">
    <citation type="journal article" date="2007" name="Toxicon">
        <title>Venomic analyses of Scolopendra viridicornis nigra and Scolopendra angulata (Centipede, Scolopendromorpha): shedding light on venoms from a neglected group.</title>
        <authorList>
            <person name="Rates B."/>
            <person name="Bemquerer M.P."/>
            <person name="Richardson M."/>
            <person name="Borges M.H."/>
            <person name="Morales R.A.V."/>
            <person name="De Lima M.E."/>
            <person name="Pimenta A.M.C."/>
        </authorList>
    </citation>
    <scope>PROTEIN SEQUENCE</scope>
    <scope>MASS SPECTROMETRY</scope>
    <scope>SUBCELLULAR LOCATION</scope>
    <source>
        <tissue>Venom</tissue>
    </source>
</reference>
<dbReference type="GO" id="GO:0005576">
    <property type="term" value="C:extracellular region"/>
    <property type="evidence" value="ECO:0007669"/>
    <property type="project" value="UniProtKB-SubCell"/>
</dbReference>
<dbReference type="GO" id="GO:0090729">
    <property type="term" value="F:toxin activity"/>
    <property type="evidence" value="ECO:0007669"/>
    <property type="project" value="UniProtKB-KW"/>
</dbReference>
<evidence type="ECO:0000269" key="1">
    <source>
    </source>
</evidence>
<evidence type="ECO:0000305" key="2"/>
<evidence type="ECO:0000305" key="3">
    <source>
    </source>
</evidence>
<keyword id="KW-0903">Direct protein sequencing</keyword>
<keyword id="KW-0528">Neurotoxin</keyword>
<keyword id="KW-0964">Secreted</keyword>
<keyword id="KW-0800">Toxin</keyword>
<comment type="subcellular location">
    <subcellularLocation>
        <location evidence="1">Secreted</location>
    </subcellularLocation>
</comment>
<comment type="tissue specificity">
    <text evidence="3">Expressed by the venom gland.</text>
</comment>
<comment type="mass spectrometry" mass="5887.74" method="Electrospray" evidence="1"/>
<comment type="similarity">
    <text evidence="2">Belongs to the scolopendra toxin 4 family.</text>
</comment>
<proteinExistence type="evidence at protein level"/>
<accession>P0C8C3</accession>
<name>STX4_SCOAN</name>
<organism>
    <name type="scientific">Scolopendra angulata</name>
    <name type="common">Barbados giant red centipede</name>
    <dbReference type="NCBI Taxonomy" id="486498"/>
    <lineage>
        <taxon>Eukaryota</taxon>
        <taxon>Metazoa</taxon>
        <taxon>Ecdysozoa</taxon>
        <taxon>Arthropoda</taxon>
        <taxon>Myriapoda</taxon>
        <taxon>Chilopoda</taxon>
        <taxon>Pleurostigmophora</taxon>
        <taxon>Scolopendromorpha</taxon>
        <taxon>Scolopendridae</taxon>
        <taxon>Scolopendra</taxon>
    </lineage>
</organism>
<sequence length="9" mass="1079">AKEKEVTFQ</sequence>
<feature type="chain" id="PRO_0000352859" description="Scolopendra 5887.74 Da toxin">
    <location>
        <begin position="1"/>
        <end position="9" status="greater than"/>
    </location>
</feature>
<feature type="non-terminal residue">
    <location>
        <position position="9"/>
    </location>
</feature>